<keyword id="KW-0445">Lipid transport</keyword>
<keyword id="KW-0446">Lipid-binding</keyword>
<keyword id="KW-0472">Membrane</keyword>
<keyword id="KW-0496">Mitochondrion</keyword>
<keyword id="KW-1000">Mitochondrion outer membrane</keyword>
<keyword id="KW-0812">Transmembrane</keyword>
<keyword id="KW-1134">Transmembrane beta strand</keyword>
<keyword id="KW-0813">Transport</keyword>
<organism>
    <name type="scientific">Candida dubliniensis (strain CD36 / ATCC MYA-646 / CBS 7987 / NCPF 3949 / NRRL Y-17841)</name>
    <name type="common">Yeast</name>
    <dbReference type="NCBI Taxonomy" id="573826"/>
    <lineage>
        <taxon>Eukaryota</taxon>
        <taxon>Fungi</taxon>
        <taxon>Dikarya</taxon>
        <taxon>Ascomycota</taxon>
        <taxon>Saccharomycotina</taxon>
        <taxon>Pichiomycetes</taxon>
        <taxon>Debaryomycetaceae</taxon>
        <taxon>Candida/Lodderomyces clade</taxon>
        <taxon>Candida</taxon>
    </lineage>
</organism>
<feature type="chain" id="PRO_0000384334" description="Mitochondrial distribution and morphology protein 34">
    <location>
        <begin position="1"/>
        <end position="622"/>
    </location>
</feature>
<feature type="domain" description="SMP-LTD" evidence="1">
    <location>
        <begin position="1"/>
        <end position="204"/>
    </location>
</feature>
<feature type="region of interest" description="Disordered" evidence="2">
    <location>
        <begin position="362"/>
        <end position="399"/>
    </location>
</feature>
<feature type="region of interest" description="Disordered" evidence="2">
    <location>
        <begin position="568"/>
        <end position="592"/>
    </location>
</feature>
<feature type="compositionally biased region" description="Basic residues" evidence="2">
    <location>
        <begin position="370"/>
        <end position="384"/>
    </location>
</feature>
<feature type="compositionally biased region" description="Polar residues" evidence="2">
    <location>
        <begin position="390"/>
        <end position="399"/>
    </location>
</feature>
<feature type="compositionally biased region" description="Low complexity" evidence="2">
    <location>
        <begin position="571"/>
        <end position="583"/>
    </location>
</feature>
<gene>
    <name evidence="1" type="primary">MDM34</name>
    <name type="ORF">CD36_05840</name>
</gene>
<name>MDM34_CANDC</name>
<dbReference type="EMBL" id="FM992688">
    <property type="protein sequence ID" value="CAX44849.1"/>
    <property type="molecule type" value="Genomic_DNA"/>
</dbReference>
<dbReference type="RefSeq" id="XP_002417248.1">
    <property type="nucleotide sequence ID" value="XM_002417203.1"/>
</dbReference>
<dbReference type="SMR" id="B9W824"/>
<dbReference type="GeneID" id="8044787"/>
<dbReference type="KEGG" id="cdu:CD36_05840"/>
<dbReference type="CGD" id="CAL0000169650">
    <property type="gene designation" value="Cd36_05840"/>
</dbReference>
<dbReference type="VEuPathDB" id="FungiDB:CD36_05840"/>
<dbReference type="eggNOG" id="ENOG502QT3W">
    <property type="taxonomic scope" value="Eukaryota"/>
</dbReference>
<dbReference type="HOGENOM" id="CLU_476594_0_0_1"/>
<dbReference type="OrthoDB" id="17927at2759"/>
<dbReference type="Proteomes" id="UP000002605">
    <property type="component" value="Chromosome 1"/>
</dbReference>
<dbReference type="GO" id="GO:0032865">
    <property type="term" value="C:ERMES complex"/>
    <property type="evidence" value="ECO:0007669"/>
    <property type="project" value="UniProtKB-UniRule"/>
</dbReference>
<dbReference type="GO" id="GO:0008289">
    <property type="term" value="F:lipid binding"/>
    <property type="evidence" value="ECO:0007669"/>
    <property type="project" value="UniProtKB-KW"/>
</dbReference>
<dbReference type="GO" id="GO:0000002">
    <property type="term" value="P:mitochondrial genome maintenance"/>
    <property type="evidence" value="ECO:0007669"/>
    <property type="project" value="UniProtKB-UniRule"/>
</dbReference>
<dbReference type="GO" id="GO:1990456">
    <property type="term" value="P:mitochondrion-endoplasmic reticulum membrane tethering"/>
    <property type="evidence" value="ECO:0007669"/>
    <property type="project" value="TreeGrafter"/>
</dbReference>
<dbReference type="GO" id="GO:0015914">
    <property type="term" value="P:phospholipid transport"/>
    <property type="evidence" value="ECO:0007669"/>
    <property type="project" value="TreeGrafter"/>
</dbReference>
<dbReference type="CDD" id="cd21673">
    <property type="entry name" value="SMP_Mdm34"/>
    <property type="match status" value="1"/>
</dbReference>
<dbReference type="HAMAP" id="MF_03105">
    <property type="entry name" value="Mdm34"/>
    <property type="match status" value="1"/>
</dbReference>
<dbReference type="InterPro" id="IPR027536">
    <property type="entry name" value="Mdm34"/>
</dbReference>
<dbReference type="InterPro" id="IPR031468">
    <property type="entry name" value="SMP_LBD"/>
</dbReference>
<dbReference type="PANTHER" id="PTHR28185">
    <property type="entry name" value="MITOCHONDRIAL DISTRIBUTION AND MORPHOLOGY PROTEIN 34"/>
    <property type="match status" value="1"/>
</dbReference>
<dbReference type="PANTHER" id="PTHR28185:SF1">
    <property type="entry name" value="MITOCHONDRIAL DISTRIBUTION AND MORPHOLOGY PROTEIN 34"/>
    <property type="match status" value="1"/>
</dbReference>
<dbReference type="PROSITE" id="PS51847">
    <property type="entry name" value="SMP"/>
    <property type="match status" value="1"/>
</dbReference>
<sequence>MSFKVNWNSLETEPLTNWTKELLTSALNSGKSPNILASNITIKDLNFGKIAPDFEILEIGELDRDRFRGIFKIDYQGDFHLTLHTKVQANPLNIYYHNSLEKEVCNCTQDEFITPNFLLSNEQFAIPLDLKLSDIKINGIGIIVFSKSKGLTLVFRNDPLDSIKVSSTFDTVQVLANFLQKQIENQIRDLFRETLPTLIHQLSLKYLSLDNNINEIKSKLSQQDSVSMTNNELASSLKLFDDEENEFPLIYSSKNLQKNMQLFKSRETFRLSVPKFKNIVQRTRLDKFTKSYPNLLNSLYANNVDLQHRYVNNINHNNNNNASSTGIPIELLLSHDDKQHYDKTDSLLKDISSIQANNFYKYSNKDAPTKPKRRRIKVHKKNKSKHDETTTTTSKPSELQNVDNTFMESRSISPQETIDTVSTLIESVPMTRNVSSNIKSPTLDTLSTGSSSAASSQVIAHPTPKRAYQPNDTTTAATTTLNKENHIDYIKARNLYQDFIQMSQSPGYYDKVISNGGGIGLGNNNGGNYFGLERTISSSPIKHLNKDKKSINYIDTSKINEKLNQFRFDGGKNNNTNDNNSKNFRPGFTRNESNGQQGILFEAFNFPSMTAAATPPPPPPYC</sequence>
<protein>
    <recommendedName>
        <fullName evidence="1">Mitochondrial distribution and morphology protein 34</fullName>
    </recommendedName>
</protein>
<comment type="function">
    <text evidence="1">Component of the ERMES/MDM complex, which serves as a molecular tether to connect the endoplasmic reticulum (ER) and mitochondria. Components of this complex are involved in the control of mitochondrial shape and protein biogenesis, and function in nonvesicular lipid trafficking between the ER and mitochondria. MDM34 is required for the interaction of the ER-resident membrane protein MMM1 and the outer mitochondrial membrane-resident beta-barrel protein MDM10.</text>
</comment>
<comment type="subunit">
    <text evidence="1">Component of the ER-mitochondria encounter structure (ERMES) or MDM complex, composed of MMM1, MDM10, MDM12 and MDM34.</text>
</comment>
<comment type="subcellular location">
    <subcellularLocation>
        <location evidence="1">Mitochondrion outer membrane</location>
        <topology evidence="1">Multi-pass membrane protein</topology>
    </subcellularLocation>
    <text evidence="1">The ERMES/MDM complex localizes to a few discrete foci (around 10 per single cell), that represent mitochondria-endoplasmic reticulum junctions. These foci are often found next to mtDNA nucleoids.</text>
</comment>
<comment type="domain">
    <text evidence="1">Lacks alpha-helical transmembrane segments, suggesting that it resides in the membrane via beta-sheet conformations similar to those predicted for other outer membrane proteins and porin.</text>
</comment>
<comment type="domain">
    <text evidence="1">The SMP-LTD domain is a barrel-like domain that can bind various types of glycerophospholipids in its interior and mediate their transfer between two adjacent bilayers.</text>
</comment>
<comment type="similarity">
    <text evidence="1">Belongs to the MDM34 family.</text>
</comment>
<evidence type="ECO:0000255" key="1">
    <source>
        <dbReference type="HAMAP-Rule" id="MF_03105"/>
    </source>
</evidence>
<evidence type="ECO:0000256" key="2">
    <source>
        <dbReference type="SAM" id="MobiDB-lite"/>
    </source>
</evidence>
<accession>B9W824</accession>
<proteinExistence type="inferred from homology"/>
<reference key="1">
    <citation type="journal article" date="2009" name="Genome Res.">
        <title>Comparative genomics of the fungal pathogens Candida dubliniensis and Candida albicans.</title>
        <authorList>
            <person name="Jackson A.P."/>
            <person name="Gamble J.A."/>
            <person name="Yeomans T."/>
            <person name="Moran G.P."/>
            <person name="Saunders D."/>
            <person name="Harris D."/>
            <person name="Aslett M."/>
            <person name="Barrell J.F."/>
            <person name="Butler G."/>
            <person name="Citiulo F."/>
            <person name="Coleman D.C."/>
            <person name="de Groot P.W.J."/>
            <person name="Goodwin T.J."/>
            <person name="Quail M.A."/>
            <person name="McQuillan J."/>
            <person name="Munro C.A."/>
            <person name="Pain A."/>
            <person name="Poulter R.T."/>
            <person name="Rajandream M.A."/>
            <person name="Renauld H."/>
            <person name="Spiering M.J."/>
            <person name="Tivey A."/>
            <person name="Gow N.A.R."/>
            <person name="Barrell B."/>
            <person name="Sullivan D.J."/>
            <person name="Berriman M."/>
        </authorList>
    </citation>
    <scope>NUCLEOTIDE SEQUENCE [LARGE SCALE GENOMIC DNA]</scope>
    <source>
        <strain>CD36 / ATCC MYA-646 / CBS 7987 / NCPF 3949 / NRRL Y-17841</strain>
    </source>
</reference>